<evidence type="ECO:0000255" key="1">
    <source>
        <dbReference type="HAMAP-Rule" id="MF_00692"/>
    </source>
</evidence>
<evidence type="ECO:0000256" key="2">
    <source>
        <dbReference type="SAM" id="MobiDB-lite"/>
    </source>
</evidence>
<reference key="1">
    <citation type="submission" date="2006-03" db="EMBL/GenBank/DDBJ databases">
        <title>Complete sequence of chromosome of Nitrobacter hamburgensis X14.</title>
        <authorList>
            <consortium name="US DOE Joint Genome Institute"/>
            <person name="Copeland A."/>
            <person name="Lucas S."/>
            <person name="Lapidus A."/>
            <person name="Barry K."/>
            <person name="Detter J.C."/>
            <person name="Glavina del Rio T."/>
            <person name="Hammon N."/>
            <person name="Israni S."/>
            <person name="Dalin E."/>
            <person name="Tice H."/>
            <person name="Pitluck S."/>
            <person name="Chain P."/>
            <person name="Malfatti S."/>
            <person name="Shin M."/>
            <person name="Vergez L."/>
            <person name="Schmutz J."/>
            <person name="Larimer F."/>
            <person name="Land M."/>
            <person name="Hauser L."/>
            <person name="Kyrpides N."/>
            <person name="Ivanova N."/>
            <person name="Ward B."/>
            <person name="Arp D."/>
            <person name="Klotz M."/>
            <person name="Stein L."/>
            <person name="O'Mullan G."/>
            <person name="Starkenburg S."/>
            <person name="Sayavedra L."/>
            <person name="Poret-Peterson A.T."/>
            <person name="Gentry M.E."/>
            <person name="Bruce D."/>
            <person name="Richardson P."/>
        </authorList>
    </citation>
    <scope>NUCLEOTIDE SEQUENCE [LARGE SCALE GENOMIC DNA]</scope>
    <source>
        <strain>DSM 10229 / NCIMB 13809 / X14</strain>
    </source>
</reference>
<comment type="function">
    <text evidence="1">Nucleotidyltransferase involved in the post-translational modification of proteins. It can catalyze the addition of adenosine monophosphate (AMP) or uridine monophosphate (UMP) to a protein, resulting in modifications known as AMPylation and UMPylation.</text>
</comment>
<comment type="catalytic activity">
    <reaction evidence="1">
        <text>L-seryl-[protein] + ATP = 3-O-(5'-adenylyl)-L-seryl-[protein] + diphosphate</text>
        <dbReference type="Rhea" id="RHEA:58120"/>
        <dbReference type="Rhea" id="RHEA-COMP:9863"/>
        <dbReference type="Rhea" id="RHEA-COMP:15073"/>
        <dbReference type="ChEBI" id="CHEBI:29999"/>
        <dbReference type="ChEBI" id="CHEBI:30616"/>
        <dbReference type="ChEBI" id="CHEBI:33019"/>
        <dbReference type="ChEBI" id="CHEBI:142516"/>
        <dbReference type="EC" id="2.7.7.108"/>
    </reaction>
</comment>
<comment type="catalytic activity">
    <reaction evidence="1">
        <text>L-threonyl-[protein] + ATP = 3-O-(5'-adenylyl)-L-threonyl-[protein] + diphosphate</text>
        <dbReference type="Rhea" id="RHEA:54292"/>
        <dbReference type="Rhea" id="RHEA-COMP:11060"/>
        <dbReference type="Rhea" id="RHEA-COMP:13847"/>
        <dbReference type="ChEBI" id="CHEBI:30013"/>
        <dbReference type="ChEBI" id="CHEBI:30616"/>
        <dbReference type="ChEBI" id="CHEBI:33019"/>
        <dbReference type="ChEBI" id="CHEBI:138113"/>
        <dbReference type="EC" id="2.7.7.108"/>
    </reaction>
</comment>
<comment type="catalytic activity">
    <reaction evidence="1">
        <text>L-tyrosyl-[protein] + ATP = O-(5'-adenylyl)-L-tyrosyl-[protein] + diphosphate</text>
        <dbReference type="Rhea" id="RHEA:54288"/>
        <dbReference type="Rhea" id="RHEA-COMP:10136"/>
        <dbReference type="Rhea" id="RHEA-COMP:13846"/>
        <dbReference type="ChEBI" id="CHEBI:30616"/>
        <dbReference type="ChEBI" id="CHEBI:33019"/>
        <dbReference type="ChEBI" id="CHEBI:46858"/>
        <dbReference type="ChEBI" id="CHEBI:83624"/>
        <dbReference type="EC" id="2.7.7.108"/>
    </reaction>
</comment>
<comment type="catalytic activity">
    <reaction evidence="1">
        <text>L-histidyl-[protein] + UTP = N(tele)-(5'-uridylyl)-L-histidyl-[protein] + diphosphate</text>
        <dbReference type="Rhea" id="RHEA:83891"/>
        <dbReference type="Rhea" id="RHEA-COMP:9745"/>
        <dbReference type="Rhea" id="RHEA-COMP:20239"/>
        <dbReference type="ChEBI" id="CHEBI:29979"/>
        <dbReference type="ChEBI" id="CHEBI:33019"/>
        <dbReference type="ChEBI" id="CHEBI:46398"/>
        <dbReference type="ChEBI" id="CHEBI:233474"/>
    </reaction>
</comment>
<comment type="catalytic activity">
    <reaction evidence="1">
        <text>L-seryl-[protein] + UTP = O-(5'-uridylyl)-L-seryl-[protein] + diphosphate</text>
        <dbReference type="Rhea" id="RHEA:64604"/>
        <dbReference type="Rhea" id="RHEA-COMP:9863"/>
        <dbReference type="Rhea" id="RHEA-COMP:16635"/>
        <dbReference type="ChEBI" id="CHEBI:29999"/>
        <dbReference type="ChEBI" id="CHEBI:33019"/>
        <dbReference type="ChEBI" id="CHEBI:46398"/>
        <dbReference type="ChEBI" id="CHEBI:156051"/>
    </reaction>
</comment>
<comment type="catalytic activity">
    <reaction evidence="1">
        <text>L-tyrosyl-[protein] + UTP = O-(5'-uridylyl)-L-tyrosyl-[protein] + diphosphate</text>
        <dbReference type="Rhea" id="RHEA:83887"/>
        <dbReference type="Rhea" id="RHEA-COMP:10136"/>
        <dbReference type="Rhea" id="RHEA-COMP:20238"/>
        <dbReference type="ChEBI" id="CHEBI:33019"/>
        <dbReference type="ChEBI" id="CHEBI:46398"/>
        <dbReference type="ChEBI" id="CHEBI:46858"/>
        <dbReference type="ChEBI" id="CHEBI:90602"/>
    </reaction>
</comment>
<comment type="cofactor">
    <cofactor evidence="1">
        <name>Mg(2+)</name>
        <dbReference type="ChEBI" id="CHEBI:18420"/>
    </cofactor>
    <cofactor evidence="1">
        <name>Mn(2+)</name>
        <dbReference type="ChEBI" id="CHEBI:29035"/>
    </cofactor>
</comment>
<comment type="similarity">
    <text evidence="1">Belongs to the SELO family.</text>
</comment>
<keyword id="KW-0067">ATP-binding</keyword>
<keyword id="KW-0460">Magnesium</keyword>
<keyword id="KW-0464">Manganese</keyword>
<keyword id="KW-0479">Metal-binding</keyword>
<keyword id="KW-0547">Nucleotide-binding</keyword>
<keyword id="KW-0548">Nucleotidyltransferase</keyword>
<keyword id="KW-1185">Reference proteome</keyword>
<keyword id="KW-0808">Transferase</keyword>
<dbReference type="EC" id="2.7.7.-" evidence="1"/>
<dbReference type="EC" id="2.7.7.108" evidence="1"/>
<dbReference type="EMBL" id="CP000319">
    <property type="protein sequence ID" value="ABE63723.1"/>
    <property type="molecule type" value="Genomic_DNA"/>
</dbReference>
<dbReference type="RefSeq" id="WP_011511385.1">
    <property type="nucleotide sequence ID" value="NC_007964.1"/>
</dbReference>
<dbReference type="SMR" id="Q1QJ74"/>
<dbReference type="KEGG" id="nha:Nham_2958"/>
<dbReference type="eggNOG" id="COG0397">
    <property type="taxonomic scope" value="Bacteria"/>
</dbReference>
<dbReference type="HOGENOM" id="CLU_010245_4_1_5"/>
<dbReference type="OrthoDB" id="9776281at2"/>
<dbReference type="Proteomes" id="UP000001953">
    <property type="component" value="Chromosome"/>
</dbReference>
<dbReference type="GO" id="GO:0070733">
    <property type="term" value="F:AMPylase activity"/>
    <property type="evidence" value="ECO:0007669"/>
    <property type="project" value="RHEA"/>
</dbReference>
<dbReference type="GO" id="GO:0005524">
    <property type="term" value="F:ATP binding"/>
    <property type="evidence" value="ECO:0007669"/>
    <property type="project" value="UniProtKB-UniRule"/>
</dbReference>
<dbReference type="GO" id="GO:0000287">
    <property type="term" value="F:magnesium ion binding"/>
    <property type="evidence" value="ECO:0007669"/>
    <property type="project" value="UniProtKB-UniRule"/>
</dbReference>
<dbReference type="HAMAP" id="MF_00692">
    <property type="entry name" value="YdiU_SelO"/>
    <property type="match status" value="1"/>
</dbReference>
<dbReference type="InterPro" id="IPR003846">
    <property type="entry name" value="SelO"/>
</dbReference>
<dbReference type="NCBIfam" id="NF000658">
    <property type="entry name" value="PRK00029.1"/>
    <property type="match status" value="1"/>
</dbReference>
<dbReference type="PANTHER" id="PTHR32057">
    <property type="entry name" value="PROTEIN ADENYLYLTRANSFERASE SELO, MITOCHONDRIAL"/>
    <property type="match status" value="1"/>
</dbReference>
<dbReference type="PANTHER" id="PTHR32057:SF14">
    <property type="entry name" value="PROTEIN ADENYLYLTRANSFERASE SELO, MITOCHONDRIAL"/>
    <property type="match status" value="1"/>
</dbReference>
<dbReference type="Pfam" id="PF02696">
    <property type="entry name" value="SelO"/>
    <property type="match status" value="1"/>
</dbReference>
<name>SELO_NITHX</name>
<gene>
    <name evidence="1" type="primary">ydiU</name>
    <name evidence="1" type="synonym">selO</name>
    <name type="ordered locus">Nham_2958</name>
</gene>
<proteinExistence type="inferred from homology"/>
<organism>
    <name type="scientific">Nitrobacter hamburgensis (strain DSM 10229 / NCIMB 13809 / X14)</name>
    <dbReference type="NCBI Taxonomy" id="323097"/>
    <lineage>
        <taxon>Bacteria</taxon>
        <taxon>Pseudomonadati</taxon>
        <taxon>Pseudomonadota</taxon>
        <taxon>Alphaproteobacteria</taxon>
        <taxon>Hyphomicrobiales</taxon>
        <taxon>Nitrobacteraceae</taxon>
        <taxon>Nitrobacter</taxon>
    </lineage>
</organism>
<feature type="chain" id="PRO_0000271836" description="Protein nucleotidyltransferase YdiU">
    <location>
        <begin position="1"/>
        <end position="505"/>
    </location>
</feature>
<feature type="region of interest" description="Disordered" evidence="2">
    <location>
        <begin position="485"/>
        <end position="505"/>
    </location>
</feature>
<feature type="active site" description="Proton acceptor" evidence="1">
    <location>
        <position position="264"/>
    </location>
</feature>
<feature type="binding site" evidence="1">
    <location>
        <position position="102"/>
    </location>
    <ligand>
        <name>ATP</name>
        <dbReference type="ChEBI" id="CHEBI:30616"/>
    </ligand>
</feature>
<feature type="binding site" evidence="1">
    <location>
        <position position="104"/>
    </location>
    <ligand>
        <name>ATP</name>
        <dbReference type="ChEBI" id="CHEBI:30616"/>
    </ligand>
</feature>
<feature type="binding site" evidence="1">
    <location>
        <position position="105"/>
    </location>
    <ligand>
        <name>ATP</name>
        <dbReference type="ChEBI" id="CHEBI:30616"/>
    </ligand>
</feature>
<feature type="binding site" evidence="1">
    <location>
        <position position="125"/>
    </location>
    <ligand>
        <name>ATP</name>
        <dbReference type="ChEBI" id="CHEBI:30616"/>
    </ligand>
</feature>
<feature type="binding site" evidence="1">
    <location>
        <position position="137"/>
    </location>
    <ligand>
        <name>ATP</name>
        <dbReference type="ChEBI" id="CHEBI:30616"/>
    </ligand>
</feature>
<feature type="binding site" evidence="1">
    <location>
        <position position="138"/>
    </location>
    <ligand>
        <name>ATP</name>
        <dbReference type="ChEBI" id="CHEBI:30616"/>
    </ligand>
</feature>
<feature type="binding site" evidence="1">
    <location>
        <position position="188"/>
    </location>
    <ligand>
        <name>ATP</name>
        <dbReference type="ChEBI" id="CHEBI:30616"/>
    </ligand>
</feature>
<feature type="binding site" evidence="1">
    <location>
        <position position="195"/>
    </location>
    <ligand>
        <name>ATP</name>
        <dbReference type="ChEBI" id="CHEBI:30616"/>
    </ligand>
</feature>
<feature type="binding site" evidence="1">
    <location>
        <position position="265"/>
    </location>
    <ligand>
        <name>Mg(2+)</name>
        <dbReference type="ChEBI" id="CHEBI:18420"/>
    </ligand>
</feature>
<feature type="binding site" evidence="1">
    <location>
        <position position="274"/>
    </location>
    <ligand>
        <name>ATP</name>
        <dbReference type="ChEBI" id="CHEBI:30616"/>
    </ligand>
</feature>
<feature type="binding site" evidence="1">
    <location>
        <position position="274"/>
    </location>
    <ligand>
        <name>Mg(2+)</name>
        <dbReference type="ChEBI" id="CHEBI:18420"/>
    </ligand>
</feature>
<protein>
    <recommendedName>
        <fullName evidence="1">Protein nucleotidyltransferase YdiU</fullName>
        <ecNumber evidence="1">2.7.7.-</ecNumber>
    </recommendedName>
    <alternativeName>
        <fullName evidence="1">Protein adenylyltransferase YdiU</fullName>
        <ecNumber evidence="1">2.7.7.108</ecNumber>
    </alternativeName>
    <alternativeName>
        <fullName evidence="1">Protein uridylyltransferase YdiU</fullName>
        <ecNumber evidence="1">2.7.7.-</ecNumber>
    </alternativeName>
</protein>
<accession>Q1QJ74</accession>
<sequence length="505" mass="55344">MPPSAEFARSTSTNEAAPIRFDNTYARLPEAFYQRVEPATAAAPRLLRVNDALARQLRIDPQFLESPEGVAVLSGNVIAPGSEPIAQAYAGHQFGDFVPQLGDGRAILLGEVVDVAGKRYDLQLKGSGRTRFSRGGDGRAALGPVIREYIVSEAMAALGIPTTRSLAAVLTGENVMRERVLPGGVLTRVASSHLRVGTFQYFAARGDIENLRVLADYAIERHYPEARSAEDPYRAFYDAVVAALARLAARWMLVGFIHGVLNTDNTAIGGETIDYGPCAFMDAYHPDKVFSSIDQFGRYAFANQPAVIRWNLTRFAETLLPLMADGTDKAIEAANASIARFKDQYQDAYIRGFRQKLGLALEMEGDLELAADLLARMAENQADFTLTFRALCEAAADPKGNAGVRALFANPSAFDEWAARWRERLSLEERSAEARRTAMLAASPVFIPRNHRIEAAIQDAEAGHFDKFHELVEVLAHPYDDQPQFADYGKPPAPGEEVQQTFCGT</sequence>